<feature type="chain" id="PRO_0000227324" description="UvrABC system protein B">
    <location>
        <begin position="1"/>
        <end position="663"/>
    </location>
</feature>
<feature type="domain" description="Helicase ATP-binding" evidence="1">
    <location>
        <begin position="26"/>
        <end position="414"/>
    </location>
</feature>
<feature type="domain" description="Helicase C-terminal" evidence="1">
    <location>
        <begin position="430"/>
        <end position="596"/>
    </location>
</feature>
<feature type="domain" description="UVR" evidence="1">
    <location>
        <begin position="624"/>
        <end position="659"/>
    </location>
</feature>
<feature type="short sequence motif" description="Beta-hairpin">
    <location>
        <begin position="92"/>
        <end position="115"/>
    </location>
</feature>
<feature type="binding site" evidence="1">
    <location>
        <begin position="39"/>
        <end position="46"/>
    </location>
    <ligand>
        <name>ATP</name>
        <dbReference type="ChEBI" id="CHEBI:30616"/>
    </ligand>
</feature>
<sequence>MKDLFKIYSNYQPAGDQPTAIASLIDGLESGLAKQTLLGVTGSGKTFTIAHVIQAMKRPTLIMAPNKTLAAQLYGEFKAFFPDNAVEYFVSYYDYYQPEAYVPASDTFIEKDASINEHIEQMRLSATKALIERKDAIIVATVSAIYGLGDPDSYLRMLLHLSRGEQSDQRKILKRLAEMQYTRTNLSLERGQFRVNGDVIDIFPADSEKEAIRIELFDDEVDNIARFDPLTGEILQRLPRVTIFPKTHYVTPRERILETVEKVKVELQERLAELNAQNKLVEAQRLEQRTCFDIEMMLELGYCSGIENYSRYLSNREAGEAPPTLFDYLPPEALLIIDESHVTVPQIGGMYRGDRARKETLVNYGFRLPSALDNRPLRFEEFEERSPQTIYISATPGPYEQEHSDNVAEQVVRPTGLIDPEVEIRPVKTQVDDLMSEIRQVIAQGSRILVTTLTKRMAEDLTEYLSEHGIKVRYLHSDVDTVERMEIIRDLRLGEFDVLVGINLLREGLDMPEVALVAILDADKEGFLRSERSLIQTIGRAARNVKGRAILYADNITGSMQRALTETERRREKQKAFNLKHGITPKGINKSVEDILEGAYIGKRKTMVAEQAPRYTHWSPQELAKQINALEKQMYAHAQNMEFELAAKIRDEYLLLKEQLMKI</sequence>
<reference key="1">
    <citation type="journal article" date="2004" name="Nat. Genet.">
        <title>Evidence in the Legionella pneumophila genome for exploitation of host cell functions and high genome plasticity.</title>
        <authorList>
            <person name="Cazalet C."/>
            <person name="Rusniok C."/>
            <person name="Brueggemann H."/>
            <person name="Zidane N."/>
            <person name="Magnier A."/>
            <person name="Ma L."/>
            <person name="Tichit M."/>
            <person name="Jarraud S."/>
            <person name="Bouchier C."/>
            <person name="Vandenesch F."/>
            <person name="Kunst F."/>
            <person name="Etienne J."/>
            <person name="Glaser P."/>
            <person name="Buchrieser C."/>
        </authorList>
    </citation>
    <scope>NUCLEOTIDE SEQUENCE [LARGE SCALE GENOMIC DNA]</scope>
    <source>
        <strain>Lens</strain>
    </source>
</reference>
<keyword id="KW-0067">ATP-binding</keyword>
<keyword id="KW-0963">Cytoplasm</keyword>
<keyword id="KW-0227">DNA damage</keyword>
<keyword id="KW-0228">DNA excision</keyword>
<keyword id="KW-0234">DNA repair</keyword>
<keyword id="KW-0267">Excision nuclease</keyword>
<keyword id="KW-0547">Nucleotide-binding</keyword>
<keyword id="KW-0742">SOS response</keyword>
<accession>Q5X0E6</accession>
<dbReference type="EMBL" id="CR628337">
    <property type="protein sequence ID" value="CAH14304.1"/>
    <property type="molecule type" value="Genomic_DNA"/>
</dbReference>
<dbReference type="RefSeq" id="WP_011214362.1">
    <property type="nucleotide sequence ID" value="NC_006369.1"/>
</dbReference>
<dbReference type="SMR" id="Q5X0E6"/>
<dbReference type="KEGG" id="lpf:lpl0074"/>
<dbReference type="LegioList" id="lpl0074"/>
<dbReference type="HOGENOM" id="CLU_009621_2_1_6"/>
<dbReference type="Proteomes" id="UP000002517">
    <property type="component" value="Chromosome"/>
</dbReference>
<dbReference type="GO" id="GO:0005737">
    <property type="term" value="C:cytoplasm"/>
    <property type="evidence" value="ECO:0007669"/>
    <property type="project" value="UniProtKB-SubCell"/>
</dbReference>
<dbReference type="GO" id="GO:0009380">
    <property type="term" value="C:excinuclease repair complex"/>
    <property type="evidence" value="ECO:0007669"/>
    <property type="project" value="InterPro"/>
</dbReference>
<dbReference type="GO" id="GO:0005524">
    <property type="term" value="F:ATP binding"/>
    <property type="evidence" value="ECO:0007669"/>
    <property type="project" value="UniProtKB-UniRule"/>
</dbReference>
<dbReference type="GO" id="GO:0016887">
    <property type="term" value="F:ATP hydrolysis activity"/>
    <property type="evidence" value="ECO:0007669"/>
    <property type="project" value="InterPro"/>
</dbReference>
<dbReference type="GO" id="GO:0003677">
    <property type="term" value="F:DNA binding"/>
    <property type="evidence" value="ECO:0007669"/>
    <property type="project" value="UniProtKB-UniRule"/>
</dbReference>
<dbReference type="GO" id="GO:0009381">
    <property type="term" value="F:excinuclease ABC activity"/>
    <property type="evidence" value="ECO:0007669"/>
    <property type="project" value="UniProtKB-UniRule"/>
</dbReference>
<dbReference type="GO" id="GO:0006289">
    <property type="term" value="P:nucleotide-excision repair"/>
    <property type="evidence" value="ECO:0007669"/>
    <property type="project" value="UniProtKB-UniRule"/>
</dbReference>
<dbReference type="GO" id="GO:0009432">
    <property type="term" value="P:SOS response"/>
    <property type="evidence" value="ECO:0007669"/>
    <property type="project" value="UniProtKB-UniRule"/>
</dbReference>
<dbReference type="CDD" id="cd17916">
    <property type="entry name" value="DEXHc_UvrB"/>
    <property type="match status" value="1"/>
</dbReference>
<dbReference type="CDD" id="cd18790">
    <property type="entry name" value="SF2_C_UvrB"/>
    <property type="match status" value="1"/>
</dbReference>
<dbReference type="FunFam" id="3.40.50.300:FF:000477">
    <property type="entry name" value="UvrABC system protein B"/>
    <property type="match status" value="1"/>
</dbReference>
<dbReference type="Gene3D" id="6.10.140.240">
    <property type="match status" value="1"/>
</dbReference>
<dbReference type="Gene3D" id="3.40.50.300">
    <property type="entry name" value="P-loop containing nucleotide triphosphate hydrolases"/>
    <property type="match status" value="3"/>
</dbReference>
<dbReference type="Gene3D" id="4.10.860.10">
    <property type="entry name" value="UVR domain"/>
    <property type="match status" value="1"/>
</dbReference>
<dbReference type="HAMAP" id="MF_00204">
    <property type="entry name" value="UvrB"/>
    <property type="match status" value="1"/>
</dbReference>
<dbReference type="InterPro" id="IPR006935">
    <property type="entry name" value="Helicase/UvrB_N"/>
</dbReference>
<dbReference type="InterPro" id="IPR014001">
    <property type="entry name" value="Helicase_ATP-bd"/>
</dbReference>
<dbReference type="InterPro" id="IPR001650">
    <property type="entry name" value="Helicase_C-like"/>
</dbReference>
<dbReference type="InterPro" id="IPR027417">
    <property type="entry name" value="P-loop_NTPase"/>
</dbReference>
<dbReference type="InterPro" id="IPR001943">
    <property type="entry name" value="UVR_dom"/>
</dbReference>
<dbReference type="InterPro" id="IPR036876">
    <property type="entry name" value="UVR_dom_sf"/>
</dbReference>
<dbReference type="InterPro" id="IPR004807">
    <property type="entry name" value="UvrB"/>
</dbReference>
<dbReference type="InterPro" id="IPR041471">
    <property type="entry name" value="UvrB_inter"/>
</dbReference>
<dbReference type="InterPro" id="IPR024759">
    <property type="entry name" value="UvrB_YAD/RRR_dom"/>
</dbReference>
<dbReference type="NCBIfam" id="NF003673">
    <property type="entry name" value="PRK05298.1"/>
    <property type="match status" value="1"/>
</dbReference>
<dbReference type="NCBIfam" id="TIGR00631">
    <property type="entry name" value="uvrb"/>
    <property type="match status" value="1"/>
</dbReference>
<dbReference type="PANTHER" id="PTHR24029">
    <property type="entry name" value="UVRABC SYSTEM PROTEIN B"/>
    <property type="match status" value="1"/>
</dbReference>
<dbReference type="PANTHER" id="PTHR24029:SF0">
    <property type="entry name" value="UVRABC SYSTEM PROTEIN B"/>
    <property type="match status" value="1"/>
</dbReference>
<dbReference type="Pfam" id="PF00271">
    <property type="entry name" value="Helicase_C"/>
    <property type="match status" value="1"/>
</dbReference>
<dbReference type="Pfam" id="PF04851">
    <property type="entry name" value="ResIII"/>
    <property type="match status" value="1"/>
</dbReference>
<dbReference type="Pfam" id="PF02151">
    <property type="entry name" value="UVR"/>
    <property type="match status" value="1"/>
</dbReference>
<dbReference type="Pfam" id="PF12344">
    <property type="entry name" value="UvrB"/>
    <property type="match status" value="1"/>
</dbReference>
<dbReference type="Pfam" id="PF17757">
    <property type="entry name" value="UvrB_inter"/>
    <property type="match status" value="1"/>
</dbReference>
<dbReference type="SMART" id="SM00487">
    <property type="entry name" value="DEXDc"/>
    <property type="match status" value="1"/>
</dbReference>
<dbReference type="SMART" id="SM00490">
    <property type="entry name" value="HELICc"/>
    <property type="match status" value="1"/>
</dbReference>
<dbReference type="SUPFAM" id="SSF46600">
    <property type="entry name" value="C-terminal UvrC-binding domain of UvrB"/>
    <property type="match status" value="1"/>
</dbReference>
<dbReference type="SUPFAM" id="SSF52540">
    <property type="entry name" value="P-loop containing nucleoside triphosphate hydrolases"/>
    <property type="match status" value="2"/>
</dbReference>
<dbReference type="PROSITE" id="PS51192">
    <property type="entry name" value="HELICASE_ATP_BIND_1"/>
    <property type="match status" value="1"/>
</dbReference>
<dbReference type="PROSITE" id="PS51194">
    <property type="entry name" value="HELICASE_CTER"/>
    <property type="match status" value="1"/>
</dbReference>
<dbReference type="PROSITE" id="PS50151">
    <property type="entry name" value="UVR"/>
    <property type="match status" value="1"/>
</dbReference>
<proteinExistence type="inferred from homology"/>
<evidence type="ECO:0000255" key="1">
    <source>
        <dbReference type="HAMAP-Rule" id="MF_00204"/>
    </source>
</evidence>
<comment type="function">
    <text evidence="1">The UvrABC repair system catalyzes the recognition and processing of DNA lesions. A damage recognition complex composed of 2 UvrA and 2 UvrB subunits scans DNA for abnormalities. Upon binding of the UvrA(2)B(2) complex to a putative damaged site, the DNA wraps around one UvrB monomer. DNA wrap is dependent on ATP binding by UvrB and probably causes local melting of the DNA helix, facilitating insertion of UvrB beta-hairpin between the DNA strands. Then UvrB probes one DNA strand for the presence of a lesion. If a lesion is found the UvrA subunits dissociate and the UvrB-DNA preincision complex is formed. This complex is subsequently bound by UvrC and the second UvrB is released. If no lesion is found, the DNA wraps around the other UvrB subunit that will check the other stand for damage.</text>
</comment>
<comment type="subunit">
    <text evidence="1">Forms a heterotetramer with UvrA during the search for lesions. Interacts with UvrC in an incision complex.</text>
</comment>
<comment type="subcellular location">
    <subcellularLocation>
        <location evidence="1">Cytoplasm</location>
    </subcellularLocation>
</comment>
<comment type="domain">
    <text evidence="1">The beta-hairpin motif is involved in DNA binding.</text>
</comment>
<comment type="similarity">
    <text evidence="1">Belongs to the UvrB family.</text>
</comment>
<organism>
    <name type="scientific">Legionella pneumophila (strain Lens)</name>
    <dbReference type="NCBI Taxonomy" id="297245"/>
    <lineage>
        <taxon>Bacteria</taxon>
        <taxon>Pseudomonadati</taxon>
        <taxon>Pseudomonadota</taxon>
        <taxon>Gammaproteobacteria</taxon>
        <taxon>Legionellales</taxon>
        <taxon>Legionellaceae</taxon>
        <taxon>Legionella</taxon>
    </lineage>
</organism>
<protein>
    <recommendedName>
        <fullName evidence="1">UvrABC system protein B</fullName>
        <shortName evidence="1">Protein UvrB</shortName>
    </recommendedName>
    <alternativeName>
        <fullName evidence="1">Excinuclease ABC subunit B</fullName>
    </alternativeName>
</protein>
<name>UVRB_LEGPL</name>
<gene>
    <name evidence="1" type="primary">uvrB</name>
    <name type="ordered locus">lpl0074</name>
</gene>